<comment type="function">
    <text evidence="1">Produces ATP from ADP in the presence of a proton gradient across the membrane. The gamma chain is believed to be important in regulating ATPase activity and the flow of protons through the CF(0) complex.</text>
</comment>
<comment type="subunit">
    <text evidence="1">F-type ATPases have 2 components, CF(1) - the catalytic core - and CF(0) - the membrane proton channel. CF(1) has five subunits: alpha(3), beta(3), gamma(1), delta(1), epsilon(1). CF(0) has three main subunits: a, b and c.</text>
</comment>
<comment type="subcellular location">
    <subcellularLocation>
        <location evidence="1">Cell membrane</location>
        <topology evidence="1">Peripheral membrane protein</topology>
    </subcellularLocation>
</comment>
<comment type="similarity">
    <text evidence="1">Belongs to the ATPase gamma chain family.</text>
</comment>
<sequence length="292" mass="32222">MAGSLREIKAKIASIKQTSHITGAMQMVSASKLTRSEQAAKDFQIYASKIRQITTDLLHSELVNGSSNPMLDARPVRKSGYIVITSDKGLVGGYNSTILKAVLDMIKRDHDSEDEYAIISIGGTGSDFFKARNMNVAFELRGLEDQPSFDQVGKIISKAVGMYQNELFDELYVCYNHHINSLSREVRVEKMLPIADFDPNESEGHVLTKFELEPDRDTILDQLLPQYAESLIYGAIVDAKTAEHAAGMTAMQTATDNAKKIINDLTIQYNRARQAAITQEITEIVGGASALE</sequence>
<evidence type="ECO:0000255" key="1">
    <source>
        <dbReference type="HAMAP-Rule" id="MF_00815"/>
    </source>
</evidence>
<gene>
    <name evidence="1" type="primary">atpG</name>
    <name type="ordered locus">str0483</name>
</gene>
<dbReference type="EMBL" id="CP000024">
    <property type="protein sequence ID" value="AAV62082.1"/>
    <property type="molecule type" value="Genomic_DNA"/>
</dbReference>
<dbReference type="RefSeq" id="WP_002949964.1">
    <property type="nucleotide sequence ID" value="NC_006449.1"/>
</dbReference>
<dbReference type="SMR" id="Q5M105"/>
<dbReference type="KEGG" id="stc:str0483"/>
<dbReference type="HOGENOM" id="CLU_050669_0_1_9"/>
<dbReference type="GO" id="GO:0005886">
    <property type="term" value="C:plasma membrane"/>
    <property type="evidence" value="ECO:0007669"/>
    <property type="project" value="UniProtKB-SubCell"/>
</dbReference>
<dbReference type="GO" id="GO:0045259">
    <property type="term" value="C:proton-transporting ATP synthase complex"/>
    <property type="evidence" value="ECO:0007669"/>
    <property type="project" value="UniProtKB-KW"/>
</dbReference>
<dbReference type="GO" id="GO:0005524">
    <property type="term" value="F:ATP binding"/>
    <property type="evidence" value="ECO:0007669"/>
    <property type="project" value="UniProtKB-UniRule"/>
</dbReference>
<dbReference type="GO" id="GO:0046933">
    <property type="term" value="F:proton-transporting ATP synthase activity, rotational mechanism"/>
    <property type="evidence" value="ECO:0007669"/>
    <property type="project" value="UniProtKB-UniRule"/>
</dbReference>
<dbReference type="GO" id="GO:0042777">
    <property type="term" value="P:proton motive force-driven plasma membrane ATP synthesis"/>
    <property type="evidence" value="ECO:0007669"/>
    <property type="project" value="UniProtKB-UniRule"/>
</dbReference>
<dbReference type="CDD" id="cd12151">
    <property type="entry name" value="F1-ATPase_gamma"/>
    <property type="match status" value="1"/>
</dbReference>
<dbReference type="FunFam" id="3.40.1380.10:FF:000002">
    <property type="entry name" value="ATP synthase gamma chain"/>
    <property type="match status" value="1"/>
</dbReference>
<dbReference type="Gene3D" id="3.40.1380.10">
    <property type="match status" value="1"/>
</dbReference>
<dbReference type="Gene3D" id="1.10.287.80">
    <property type="entry name" value="ATP synthase, gamma subunit, helix hairpin domain"/>
    <property type="match status" value="1"/>
</dbReference>
<dbReference type="HAMAP" id="MF_00815">
    <property type="entry name" value="ATP_synth_gamma_bact"/>
    <property type="match status" value="1"/>
</dbReference>
<dbReference type="InterPro" id="IPR035968">
    <property type="entry name" value="ATP_synth_F1_ATPase_gsu"/>
</dbReference>
<dbReference type="InterPro" id="IPR000131">
    <property type="entry name" value="ATP_synth_F1_gsu"/>
</dbReference>
<dbReference type="InterPro" id="IPR023632">
    <property type="entry name" value="ATP_synth_F1_gsu_CS"/>
</dbReference>
<dbReference type="NCBIfam" id="TIGR01146">
    <property type="entry name" value="ATPsyn_F1gamma"/>
    <property type="match status" value="1"/>
</dbReference>
<dbReference type="NCBIfam" id="NF004147">
    <property type="entry name" value="PRK05621.2-1"/>
    <property type="match status" value="1"/>
</dbReference>
<dbReference type="PANTHER" id="PTHR11693">
    <property type="entry name" value="ATP SYNTHASE GAMMA CHAIN"/>
    <property type="match status" value="1"/>
</dbReference>
<dbReference type="PANTHER" id="PTHR11693:SF22">
    <property type="entry name" value="ATP SYNTHASE SUBUNIT GAMMA, MITOCHONDRIAL"/>
    <property type="match status" value="1"/>
</dbReference>
<dbReference type="Pfam" id="PF00231">
    <property type="entry name" value="ATP-synt"/>
    <property type="match status" value="1"/>
</dbReference>
<dbReference type="PRINTS" id="PR00126">
    <property type="entry name" value="ATPASEGAMMA"/>
</dbReference>
<dbReference type="SUPFAM" id="SSF52943">
    <property type="entry name" value="ATP synthase (F1-ATPase), gamma subunit"/>
    <property type="match status" value="1"/>
</dbReference>
<dbReference type="PROSITE" id="PS00153">
    <property type="entry name" value="ATPASE_GAMMA"/>
    <property type="match status" value="1"/>
</dbReference>
<feature type="chain" id="PRO_0000073397" description="ATP synthase gamma chain">
    <location>
        <begin position="1"/>
        <end position="292"/>
    </location>
</feature>
<organism>
    <name type="scientific">Streptococcus thermophilus (strain CNRZ 1066)</name>
    <dbReference type="NCBI Taxonomy" id="299768"/>
    <lineage>
        <taxon>Bacteria</taxon>
        <taxon>Bacillati</taxon>
        <taxon>Bacillota</taxon>
        <taxon>Bacilli</taxon>
        <taxon>Lactobacillales</taxon>
        <taxon>Streptococcaceae</taxon>
        <taxon>Streptococcus</taxon>
    </lineage>
</organism>
<accession>Q5M105</accession>
<name>ATPG_STRT1</name>
<protein>
    <recommendedName>
        <fullName evidence="1">ATP synthase gamma chain</fullName>
    </recommendedName>
    <alternativeName>
        <fullName evidence="1">ATP synthase F1 sector gamma subunit</fullName>
    </alternativeName>
    <alternativeName>
        <fullName evidence="1">F-ATPase gamma subunit</fullName>
    </alternativeName>
</protein>
<reference key="1">
    <citation type="journal article" date="2004" name="Nat. Biotechnol.">
        <title>Complete sequence and comparative genome analysis of the dairy bacterium Streptococcus thermophilus.</title>
        <authorList>
            <person name="Bolotin A."/>
            <person name="Quinquis B."/>
            <person name="Renault P."/>
            <person name="Sorokin A."/>
            <person name="Ehrlich S.D."/>
            <person name="Kulakauskas S."/>
            <person name="Lapidus A."/>
            <person name="Goltsman E."/>
            <person name="Mazur M."/>
            <person name="Pusch G.D."/>
            <person name="Fonstein M."/>
            <person name="Overbeek R."/>
            <person name="Kyprides N."/>
            <person name="Purnelle B."/>
            <person name="Prozzi D."/>
            <person name="Ngui K."/>
            <person name="Masuy D."/>
            <person name="Hancy F."/>
            <person name="Burteau S."/>
            <person name="Boutry M."/>
            <person name="Delcour J."/>
            <person name="Goffeau A."/>
            <person name="Hols P."/>
        </authorList>
    </citation>
    <scope>NUCLEOTIDE SEQUENCE [LARGE SCALE GENOMIC DNA]</scope>
    <source>
        <strain>CNRZ 1066</strain>
    </source>
</reference>
<proteinExistence type="inferred from homology"/>
<keyword id="KW-0066">ATP synthesis</keyword>
<keyword id="KW-1003">Cell membrane</keyword>
<keyword id="KW-0139">CF(1)</keyword>
<keyword id="KW-0375">Hydrogen ion transport</keyword>
<keyword id="KW-0406">Ion transport</keyword>
<keyword id="KW-0472">Membrane</keyword>
<keyword id="KW-0813">Transport</keyword>